<comment type="function">
    <text evidence="1">Converts 2,5-diamino-6-(ribosylamino)-4(3h)-pyrimidinone 5'-phosphate into 5-amino-6-(ribosylamino)-2,4(1h,3h)-pyrimidinedione 5'-phosphate.</text>
</comment>
<comment type="catalytic activity">
    <reaction>
        <text>2,5-diamino-6-hydroxy-4-(5-phosphoribosylamino)-pyrimidine + H2O + H(+) = 5-amino-6-(5-phospho-D-ribosylamino)uracil + NH4(+)</text>
        <dbReference type="Rhea" id="RHEA:21868"/>
        <dbReference type="ChEBI" id="CHEBI:15377"/>
        <dbReference type="ChEBI" id="CHEBI:15378"/>
        <dbReference type="ChEBI" id="CHEBI:28938"/>
        <dbReference type="ChEBI" id="CHEBI:58453"/>
        <dbReference type="ChEBI" id="CHEBI:58614"/>
        <dbReference type="EC" id="3.5.4.26"/>
    </reaction>
</comment>
<comment type="catalytic activity">
    <reaction>
        <text>5-amino-6-(5-phospho-D-ribitylamino)uracil + NADP(+) = 5-amino-6-(5-phospho-D-ribosylamino)uracil + NADPH + H(+)</text>
        <dbReference type="Rhea" id="RHEA:17845"/>
        <dbReference type="ChEBI" id="CHEBI:15378"/>
        <dbReference type="ChEBI" id="CHEBI:57783"/>
        <dbReference type="ChEBI" id="CHEBI:58349"/>
        <dbReference type="ChEBI" id="CHEBI:58421"/>
        <dbReference type="ChEBI" id="CHEBI:58453"/>
        <dbReference type="EC" id="1.1.1.193"/>
    </reaction>
</comment>
<comment type="cofactor">
    <cofactor evidence="1">
        <name>Zn(2+)</name>
        <dbReference type="ChEBI" id="CHEBI:29105"/>
    </cofactor>
    <text evidence="1">Binds 1 zinc ion.</text>
</comment>
<comment type="pathway">
    <text>Cofactor biosynthesis; riboflavin biosynthesis; 5-amino-6-(D-ribitylamino)uracil from GTP: step 2/4.</text>
</comment>
<comment type="pathway">
    <text>Cofactor biosynthesis; riboflavin biosynthesis; 5-amino-6-(D-ribitylamino)uracil from GTP: step 3/4.</text>
</comment>
<comment type="similarity">
    <text evidence="3">In the N-terminal section; belongs to the cytidine and deoxycytidylate deaminase family.</text>
</comment>
<comment type="similarity">
    <text evidence="3">In the C-terminal section; belongs to the HTP reductase family.</text>
</comment>
<protein>
    <recommendedName>
        <fullName>Riboflavin biosynthesis protein RibD</fullName>
    </recommendedName>
    <domain>
        <recommendedName>
            <fullName>Diaminohydroxyphosphoribosylaminopyrimidine deaminase</fullName>
            <shortName>DRAP deaminase</shortName>
            <ecNumber>3.5.4.26</ecNumber>
        </recommendedName>
        <alternativeName>
            <fullName>Riboflavin-specific deaminase</fullName>
        </alternativeName>
    </domain>
    <domain>
        <recommendedName>
            <fullName>5-amino-6-(5-phosphoribosylamino)uracil reductase</fullName>
            <ecNumber>1.1.1.193</ecNumber>
        </recommendedName>
        <alternativeName>
            <fullName>HTP reductase</fullName>
        </alternativeName>
    </domain>
</protein>
<sequence>MKDIFYMKKAIKLAKKGSLTTSPNPNVGCIIVNNNIIVGSGWHKKTGMKHAEIYALKTSGEKAKGATAYITLEPCSHFGKTPPCCVALTKYGISRVVIATLDPNPKVSGNGVKWLKKHGILVTIGTLSKESIKINKGFFQRMTTGIPWIKLKLASSIDGRTALNNGKSKWITSDKARHDVQHVREKSDAIISSSETILFDNPLLTVRNTNNNDNNQKLLKHSKTFLKQPIRVIIDSKNRITPSHKCIKQPGLLFLIRIHSDNNIWPSHIKQIILNNKSKKIDLIDLVKMLAKYQINNILIEAGPSLSSSFLKLNIINELIIYIAPKILGNYAKPLFFLENYSNLSDVPQFKFEKITQIGKDLKLILTKHNSS</sequence>
<keyword id="KW-0378">Hydrolase</keyword>
<keyword id="KW-0479">Metal-binding</keyword>
<keyword id="KW-0511">Multifunctional enzyme</keyword>
<keyword id="KW-0521">NADP</keyword>
<keyword id="KW-0560">Oxidoreductase</keyword>
<keyword id="KW-1185">Reference proteome</keyword>
<keyword id="KW-0686">Riboflavin biosynthesis</keyword>
<keyword id="KW-0862">Zinc</keyword>
<accession>Q89AB0</accession>
<reference key="1">
    <citation type="journal article" date="2003" name="Proc. Natl. Acad. Sci. U.S.A.">
        <title>Reductive genome evolution in Buchnera aphidicola.</title>
        <authorList>
            <person name="van Ham R.C.H.J."/>
            <person name="Kamerbeek J."/>
            <person name="Palacios C."/>
            <person name="Rausell C."/>
            <person name="Abascal F."/>
            <person name="Bastolla U."/>
            <person name="Fernandez J.M."/>
            <person name="Jimenez L."/>
            <person name="Postigo M."/>
            <person name="Silva F.J."/>
            <person name="Tamames J."/>
            <person name="Viguera E."/>
            <person name="Latorre A."/>
            <person name="Valencia A."/>
            <person name="Moran F."/>
            <person name="Moya A."/>
        </authorList>
    </citation>
    <scope>NUCLEOTIDE SEQUENCE [LARGE SCALE GENOMIC DNA]</scope>
    <source>
        <strain>Bp</strain>
    </source>
</reference>
<organism>
    <name type="scientific">Buchnera aphidicola subsp. Baizongia pistaciae (strain Bp)</name>
    <dbReference type="NCBI Taxonomy" id="224915"/>
    <lineage>
        <taxon>Bacteria</taxon>
        <taxon>Pseudomonadati</taxon>
        <taxon>Pseudomonadota</taxon>
        <taxon>Gammaproteobacteria</taxon>
        <taxon>Enterobacterales</taxon>
        <taxon>Erwiniaceae</taxon>
        <taxon>Buchnera</taxon>
    </lineage>
</organism>
<evidence type="ECO:0000250" key="1"/>
<evidence type="ECO:0000255" key="2">
    <source>
        <dbReference type="PROSITE-ProRule" id="PRU01083"/>
    </source>
</evidence>
<evidence type="ECO:0000305" key="3"/>
<feature type="chain" id="PRO_0000171716" description="Riboflavin biosynthesis protein RibD">
    <location>
        <begin position="1"/>
        <end position="372"/>
    </location>
</feature>
<feature type="domain" description="CMP/dCMP-type deaminase" evidence="2">
    <location>
        <begin position="1"/>
        <end position="122"/>
    </location>
</feature>
<feature type="region of interest" description="Deaminase">
    <location>
        <begin position="1"/>
        <end position="145"/>
    </location>
</feature>
<feature type="region of interest" description="Reductase">
    <location>
        <begin position="146"/>
        <end position="372"/>
    </location>
</feature>
<feature type="active site" description="Proton donor" evidence="1">
    <location>
        <position position="52"/>
    </location>
</feature>
<feature type="binding site" evidence="1">
    <location>
        <position position="50"/>
    </location>
    <ligand>
        <name>Zn(2+)</name>
        <dbReference type="ChEBI" id="CHEBI:29105"/>
        <note>catalytic</note>
    </ligand>
</feature>
<feature type="binding site" evidence="1">
    <location>
        <position position="75"/>
    </location>
    <ligand>
        <name>Zn(2+)</name>
        <dbReference type="ChEBI" id="CHEBI:29105"/>
        <note>catalytic</note>
    </ligand>
</feature>
<feature type="binding site" evidence="1">
    <location>
        <position position="84"/>
    </location>
    <ligand>
        <name>Zn(2+)</name>
        <dbReference type="ChEBI" id="CHEBI:29105"/>
        <note>catalytic</note>
    </ligand>
</feature>
<feature type="binding site" evidence="1">
    <location>
        <position position="154"/>
    </location>
    <ligand>
        <name>NADP(+)</name>
        <dbReference type="ChEBI" id="CHEBI:58349"/>
    </ligand>
</feature>
<feature type="binding site" evidence="1">
    <location>
        <position position="168"/>
    </location>
    <ligand>
        <name>substrate</name>
    </ligand>
</feature>
<feature type="binding site" evidence="1">
    <location>
        <position position="170"/>
    </location>
    <ligand>
        <name>NADP(+)</name>
        <dbReference type="ChEBI" id="CHEBI:58349"/>
    </ligand>
</feature>
<feature type="binding site" evidence="1">
    <location>
        <position position="184"/>
    </location>
    <ligand>
        <name>substrate</name>
    </ligand>
</feature>
<feature type="binding site" evidence="1">
    <location>
        <position position="196"/>
    </location>
    <ligand>
        <name>NADP(+)</name>
        <dbReference type="ChEBI" id="CHEBI:58349"/>
    </ligand>
</feature>
<feature type="binding site" evidence="1">
    <location>
        <position position="200"/>
    </location>
    <ligand>
        <name>NADP(+)</name>
        <dbReference type="ChEBI" id="CHEBI:58349"/>
    </ligand>
</feature>
<feature type="binding site" evidence="1">
    <location>
        <position position="204"/>
    </location>
    <ligand>
        <name>substrate</name>
    </ligand>
</feature>
<feature type="binding site" evidence="1">
    <location>
        <position position="207"/>
    </location>
    <ligand>
        <name>substrate</name>
    </ligand>
</feature>
<feature type="binding site" evidence="1">
    <location>
        <position position="236"/>
    </location>
    <ligand>
        <name>NADP(+)</name>
        <dbReference type="ChEBI" id="CHEBI:58349"/>
    </ligand>
</feature>
<feature type="binding site" evidence="1">
    <location>
        <position position="301"/>
    </location>
    <ligand>
        <name>substrate</name>
    </ligand>
</feature>
<feature type="binding site" evidence="1">
    <location>
        <begin position="303"/>
        <end position="309"/>
    </location>
    <ligand>
        <name>NADP(+)</name>
        <dbReference type="ChEBI" id="CHEBI:58349"/>
    </ligand>
</feature>
<gene>
    <name type="primary">ribD</name>
    <name type="ordered locus">bbp_408</name>
</gene>
<dbReference type="EC" id="3.5.4.26"/>
<dbReference type="EC" id="1.1.1.193"/>
<dbReference type="EMBL" id="AE016826">
    <property type="protein sequence ID" value="AAO27119.1"/>
    <property type="molecule type" value="Genomic_DNA"/>
</dbReference>
<dbReference type="RefSeq" id="WP_011091520.1">
    <property type="nucleotide sequence ID" value="NC_004545.1"/>
</dbReference>
<dbReference type="SMR" id="Q89AB0"/>
<dbReference type="STRING" id="224915.bbp_408"/>
<dbReference type="KEGG" id="bab:bbp_408"/>
<dbReference type="eggNOG" id="COG0117">
    <property type="taxonomic scope" value="Bacteria"/>
</dbReference>
<dbReference type="eggNOG" id="COG1985">
    <property type="taxonomic scope" value="Bacteria"/>
</dbReference>
<dbReference type="HOGENOM" id="CLU_036590_1_2_6"/>
<dbReference type="OrthoDB" id="9800865at2"/>
<dbReference type="UniPathway" id="UPA00275">
    <property type="reaction ID" value="UER00401"/>
</dbReference>
<dbReference type="UniPathway" id="UPA00275">
    <property type="reaction ID" value="UER00402"/>
</dbReference>
<dbReference type="Proteomes" id="UP000000601">
    <property type="component" value="Chromosome"/>
</dbReference>
<dbReference type="GO" id="GO:0008703">
    <property type="term" value="F:5-amino-6-(5-phosphoribosylamino)uracil reductase activity"/>
    <property type="evidence" value="ECO:0007669"/>
    <property type="project" value="UniProtKB-EC"/>
</dbReference>
<dbReference type="GO" id="GO:0008835">
    <property type="term" value="F:diaminohydroxyphosphoribosylaminopyrimidine deaminase activity"/>
    <property type="evidence" value="ECO:0007669"/>
    <property type="project" value="UniProtKB-EC"/>
</dbReference>
<dbReference type="GO" id="GO:0050661">
    <property type="term" value="F:NADP binding"/>
    <property type="evidence" value="ECO:0007669"/>
    <property type="project" value="InterPro"/>
</dbReference>
<dbReference type="GO" id="GO:0008270">
    <property type="term" value="F:zinc ion binding"/>
    <property type="evidence" value="ECO:0007669"/>
    <property type="project" value="InterPro"/>
</dbReference>
<dbReference type="GO" id="GO:0009231">
    <property type="term" value="P:riboflavin biosynthetic process"/>
    <property type="evidence" value="ECO:0007669"/>
    <property type="project" value="UniProtKB-UniPathway"/>
</dbReference>
<dbReference type="CDD" id="cd01284">
    <property type="entry name" value="Riboflavin_deaminase-reductase"/>
    <property type="match status" value="1"/>
</dbReference>
<dbReference type="FunFam" id="3.40.140.10:FF:000025">
    <property type="entry name" value="Riboflavin biosynthesis protein RibD"/>
    <property type="match status" value="1"/>
</dbReference>
<dbReference type="Gene3D" id="3.40.140.10">
    <property type="entry name" value="Cytidine Deaminase, domain 2"/>
    <property type="match status" value="1"/>
</dbReference>
<dbReference type="Gene3D" id="3.40.430.10">
    <property type="entry name" value="Dihydrofolate Reductase, subunit A"/>
    <property type="match status" value="1"/>
</dbReference>
<dbReference type="InterPro" id="IPR016192">
    <property type="entry name" value="APOBEC/CMP_deaminase_Zn-bd"/>
</dbReference>
<dbReference type="InterPro" id="IPR002125">
    <property type="entry name" value="CMP_dCMP_dom"/>
</dbReference>
<dbReference type="InterPro" id="IPR016193">
    <property type="entry name" value="Cytidine_deaminase-like"/>
</dbReference>
<dbReference type="InterPro" id="IPR024072">
    <property type="entry name" value="DHFR-like_dom_sf"/>
</dbReference>
<dbReference type="InterPro" id="IPR004794">
    <property type="entry name" value="Eubact_RibD"/>
</dbReference>
<dbReference type="InterPro" id="IPR011549">
    <property type="entry name" value="RibD_C"/>
</dbReference>
<dbReference type="InterPro" id="IPR002734">
    <property type="entry name" value="RibDG_C"/>
</dbReference>
<dbReference type="InterPro" id="IPR050765">
    <property type="entry name" value="Riboflavin_Biosynth_HTPR"/>
</dbReference>
<dbReference type="NCBIfam" id="TIGR00326">
    <property type="entry name" value="eubact_ribD"/>
    <property type="match status" value="1"/>
</dbReference>
<dbReference type="NCBIfam" id="TIGR00227">
    <property type="entry name" value="ribD_Cterm"/>
    <property type="match status" value="1"/>
</dbReference>
<dbReference type="PANTHER" id="PTHR38011:SF7">
    <property type="entry name" value="2,5-DIAMINO-6-RIBOSYLAMINO-4(3H)-PYRIMIDINONE 5'-PHOSPHATE REDUCTASE"/>
    <property type="match status" value="1"/>
</dbReference>
<dbReference type="PANTHER" id="PTHR38011">
    <property type="entry name" value="DIHYDROFOLATE REDUCTASE FAMILY PROTEIN (AFU_ORTHOLOGUE AFUA_8G06820)"/>
    <property type="match status" value="1"/>
</dbReference>
<dbReference type="Pfam" id="PF00383">
    <property type="entry name" value="dCMP_cyt_deam_1"/>
    <property type="match status" value="1"/>
</dbReference>
<dbReference type="Pfam" id="PF01872">
    <property type="entry name" value="RibD_C"/>
    <property type="match status" value="1"/>
</dbReference>
<dbReference type="PIRSF" id="PIRSF006769">
    <property type="entry name" value="RibD"/>
    <property type="match status" value="1"/>
</dbReference>
<dbReference type="SUPFAM" id="SSF53927">
    <property type="entry name" value="Cytidine deaminase-like"/>
    <property type="match status" value="1"/>
</dbReference>
<dbReference type="SUPFAM" id="SSF53597">
    <property type="entry name" value="Dihydrofolate reductase-like"/>
    <property type="match status" value="1"/>
</dbReference>
<dbReference type="PROSITE" id="PS00903">
    <property type="entry name" value="CYT_DCMP_DEAMINASES_1"/>
    <property type="match status" value="1"/>
</dbReference>
<dbReference type="PROSITE" id="PS51747">
    <property type="entry name" value="CYT_DCMP_DEAMINASES_2"/>
    <property type="match status" value="1"/>
</dbReference>
<proteinExistence type="inferred from homology"/>
<name>RIBD_BUCBP</name>